<dbReference type="EMBL" id="U12283">
    <property type="protein sequence ID" value="AAB60674.1"/>
    <property type="molecule type" value="Genomic_DNA"/>
</dbReference>
<dbReference type="EMBL" id="U12282">
    <property type="protein sequence ID" value="AAB60674.1"/>
    <property type="status" value="JOINED"/>
    <property type="molecule type" value="Genomic_DNA"/>
</dbReference>
<dbReference type="EMBL" id="U01662">
    <property type="protein sequence ID" value="AAA20492.1"/>
    <property type="molecule type" value="mRNA"/>
</dbReference>
<dbReference type="EMBL" id="U01663">
    <property type="protein sequence ID" value="AAA20493.1"/>
    <property type="status" value="ALT_INIT"/>
    <property type="molecule type" value="mRNA"/>
</dbReference>
<dbReference type="EMBL" id="X77602">
    <property type="protein sequence ID" value="CAA54697.1"/>
    <property type="molecule type" value="Genomic_DNA"/>
</dbReference>
<dbReference type="EMBL" id="X77605">
    <property type="protein sequence ID" value="CAA54697.1"/>
    <property type="status" value="JOINED"/>
    <property type="molecule type" value="Genomic_DNA"/>
</dbReference>
<dbReference type="EMBL" id="BC019729">
    <property type="protein sequence ID" value="AAH19729.1"/>
    <property type="status" value="ALT_INIT"/>
    <property type="molecule type" value="mRNA"/>
</dbReference>
<dbReference type="EMBL" id="BC082995">
    <property type="protein sequence ID" value="AAH82995.1"/>
    <property type="molecule type" value="mRNA"/>
</dbReference>
<dbReference type="EMBL" id="AK146871">
    <property type="protein sequence ID" value="BAE27494.1"/>
    <property type="molecule type" value="mRNA"/>
</dbReference>
<dbReference type="CCDS" id="CCDS21118.1">
    <molecule id="Q64705-1"/>
</dbReference>
<dbReference type="PIR" id="A55111">
    <property type="entry name" value="A55111"/>
</dbReference>
<dbReference type="RefSeq" id="NP_001408737.1">
    <molecule id="Q64705-2"/>
    <property type="nucleotide sequence ID" value="NM_001421808.1"/>
</dbReference>
<dbReference type="RefSeq" id="NP_035810.1">
    <molecule id="Q64705-1"/>
    <property type="nucleotide sequence ID" value="NM_011680.3"/>
</dbReference>
<dbReference type="RefSeq" id="XP_006539796.1">
    <property type="nucleotide sequence ID" value="XM_006539733.3"/>
</dbReference>
<dbReference type="RefSeq" id="XP_006539797.1">
    <property type="nucleotide sequence ID" value="XM_006539734.3"/>
</dbReference>
<dbReference type="RefSeq" id="XP_006539798.1">
    <property type="nucleotide sequence ID" value="XM_006539735.3"/>
</dbReference>
<dbReference type="SMR" id="Q64705"/>
<dbReference type="ComplexPortal" id="CPX-3084">
    <property type="entry name" value="USF2 upstream stimulatory factor complex"/>
</dbReference>
<dbReference type="ComplexPortal" id="CPX-3086">
    <property type="entry name" value="USF1-USF2 upstream stimulatory factor complex"/>
</dbReference>
<dbReference type="FunCoup" id="Q64705">
    <property type="interactions" value="2736"/>
</dbReference>
<dbReference type="IntAct" id="Q64705">
    <property type="interactions" value="2"/>
</dbReference>
<dbReference type="STRING" id="10090.ENSMUSP00000132256"/>
<dbReference type="iPTMnet" id="Q64705"/>
<dbReference type="PhosphoSitePlus" id="Q64705"/>
<dbReference type="PaxDb" id="10090-ENSMUSP00000132256"/>
<dbReference type="ProteomicsDB" id="299646">
    <molecule id="Q64705-1"/>
</dbReference>
<dbReference type="ProteomicsDB" id="299647">
    <molecule id="Q64705-2"/>
</dbReference>
<dbReference type="Pumba" id="Q64705"/>
<dbReference type="Antibodypedia" id="15859">
    <property type="antibodies" value="394 antibodies from 35 providers"/>
</dbReference>
<dbReference type="DNASU" id="22282"/>
<dbReference type="Ensembl" id="ENSMUST00000058860.14">
    <molecule id="Q64705-1"/>
    <property type="protein sequence ID" value="ENSMUSP00000132256.2"/>
    <property type="gene ID" value="ENSMUSG00000058239.14"/>
</dbReference>
<dbReference type="Ensembl" id="ENSMUST00000108119.10">
    <molecule id="Q64705-2"/>
    <property type="protein sequence ID" value="ENSMUSP00000132021.2"/>
    <property type="gene ID" value="ENSMUSG00000058239.14"/>
</dbReference>
<dbReference type="GeneID" id="22282"/>
<dbReference type="KEGG" id="mmu:22282"/>
<dbReference type="UCSC" id="uc009ghg.2">
    <molecule id="Q64705-2"/>
    <property type="organism name" value="mouse"/>
</dbReference>
<dbReference type="UCSC" id="uc009ghh.2">
    <molecule id="Q64705-1"/>
    <property type="organism name" value="mouse"/>
</dbReference>
<dbReference type="AGR" id="MGI:99961"/>
<dbReference type="CTD" id="7392"/>
<dbReference type="MGI" id="MGI:99961">
    <property type="gene designation" value="Usf2"/>
</dbReference>
<dbReference type="VEuPathDB" id="HostDB:ENSMUSG00000058239"/>
<dbReference type="eggNOG" id="KOG1318">
    <property type="taxonomic scope" value="Eukaryota"/>
</dbReference>
<dbReference type="GeneTree" id="ENSGT00940000160704"/>
<dbReference type="InParanoid" id="Q64705"/>
<dbReference type="OMA" id="RDRINNW"/>
<dbReference type="OrthoDB" id="690068at2759"/>
<dbReference type="PhylomeDB" id="Q64705"/>
<dbReference type="TreeFam" id="TF323338"/>
<dbReference type="Reactome" id="R-MMU-9018519">
    <property type="pathway name" value="Estrogen-dependent gene expression"/>
</dbReference>
<dbReference type="BioGRID-ORCS" id="22282">
    <property type="hits" value="0 hits in 79 CRISPR screens"/>
</dbReference>
<dbReference type="ChiTaRS" id="Usf2">
    <property type="organism name" value="mouse"/>
</dbReference>
<dbReference type="PRO" id="PR:Q64705"/>
<dbReference type="Proteomes" id="UP000000589">
    <property type="component" value="Chromosome 7"/>
</dbReference>
<dbReference type="RNAct" id="Q64705">
    <property type="molecule type" value="protein"/>
</dbReference>
<dbReference type="Bgee" id="ENSMUSG00000058239">
    <property type="expression patterns" value="Expressed in retinal neural layer and 255 other cell types or tissues"/>
</dbReference>
<dbReference type="ExpressionAtlas" id="Q64705">
    <property type="expression patterns" value="baseline and differential"/>
</dbReference>
<dbReference type="GO" id="GO:0005654">
    <property type="term" value="C:nucleoplasm"/>
    <property type="evidence" value="ECO:0007669"/>
    <property type="project" value="Ensembl"/>
</dbReference>
<dbReference type="GO" id="GO:0005634">
    <property type="term" value="C:nucleus"/>
    <property type="evidence" value="ECO:0000314"/>
    <property type="project" value="MGI"/>
</dbReference>
<dbReference type="GO" id="GO:0043425">
    <property type="term" value="F:bHLH transcription factor binding"/>
    <property type="evidence" value="ECO:0007669"/>
    <property type="project" value="Ensembl"/>
</dbReference>
<dbReference type="GO" id="GO:0003677">
    <property type="term" value="F:DNA binding"/>
    <property type="evidence" value="ECO:0000314"/>
    <property type="project" value="MGI"/>
</dbReference>
<dbReference type="GO" id="GO:0001228">
    <property type="term" value="F:DNA-binding transcription activator activity, RNA polymerase II-specific"/>
    <property type="evidence" value="ECO:0000315"/>
    <property type="project" value="BHF-UCL"/>
</dbReference>
<dbReference type="GO" id="GO:0046982">
    <property type="term" value="F:protein heterodimerization activity"/>
    <property type="evidence" value="ECO:0007669"/>
    <property type="project" value="Ensembl"/>
</dbReference>
<dbReference type="GO" id="GO:0042803">
    <property type="term" value="F:protein homodimerization activity"/>
    <property type="evidence" value="ECO:0007669"/>
    <property type="project" value="Ensembl"/>
</dbReference>
<dbReference type="GO" id="GO:1990837">
    <property type="term" value="F:sequence-specific double-stranded DNA binding"/>
    <property type="evidence" value="ECO:0007669"/>
    <property type="project" value="Ensembl"/>
</dbReference>
<dbReference type="GO" id="GO:0071333">
    <property type="term" value="P:cellular response to glucose stimulus"/>
    <property type="evidence" value="ECO:0000315"/>
    <property type="project" value="BHF-UCL"/>
</dbReference>
<dbReference type="GO" id="GO:0010255">
    <property type="term" value="P:glucose mediated signaling pathway"/>
    <property type="evidence" value="ECO:0000315"/>
    <property type="project" value="BHF-UCL"/>
</dbReference>
<dbReference type="GO" id="GO:0007595">
    <property type="term" value="P:lactation"/>
    <property type="evidence" value="ECO:0000315"/>
    <property type="project" value="MGI"/>
</dbReference>
<dbReference type="GO" id="GO:0055088">
    <property type="term" value="P:lipid homeostasis"/>
    <property type="evidence" value="ECO:0000315"/>
    <property type="project" value="BHF-UCL"/>
</dbReference>
<dbReference type="GO" id="GO:0045893">
    <property type="term" value="P:positive regulation of DNA-templated transcription"/>
    <property type="evidence" value="ECO:0000314"/>
    <property type="project" value="MGI"/>
</dbReference>
<dbReference type="GO" id="GO:0045944">
    <property type="term" value="P:positive regulation of transcription by RNA polymerase II"/>
    <property type="evidence" value="ECO:0000315"/>
    <property type="project" value="BHF-UCL"/>
</dbReference>
<dbReference type="GO" id="GO:0000432">
    <property type="term" value="P:positive regulation of transcription from RNA polymerase II promoter by glucose"/>
    <property type="evidence" value="ECO:0000315"/>
    <property type="project" value="BHF-UCL"/>
</dbReference>
<dbReference type="GO" id="GO:0006357">
    <property type="term" value="P:regulation of transcription by RNA polymerase II"/>
    <property type="evidence" value="ECO:0000314"/>
    <property type="project" value="MGI"/>
</dbReference>
<dbReference type="CDD" id="cd18923">
    <property type="entry name" value="bHLHzip_USF2"/>
    <property type="match status" value="1"/>
</dbReference>
<dbReference type="FunFam" id="4.10.280.10:FF:000045">
    <property type="entry name" value="upstream stimulatory factor 2 isoform X1"/>
    <property type="match status" value="1"/>
</dbReference>
<dbReference type="Gene3D" id="4.10.280.10">
    <property type="entry name" value="Helix-loop-helix DNA-binding domain"/>
    <property type="match status" value="1"/>
</dbReference>
<dbReference type="InterPro" id="IPR011598">
    <property type="entry name" value="bHLH_dom"/>
</dbReference>
<dbReference type="InterPro" id="IPR036638">
    <property type="entry name" value="HLH_DNA-bd_sf"/>
</dbReference>
<dbReference type="InterPro" id="IPR051732">
    <property type="entry name" value="USF"/>
</dbReference>
<dbReference type="PANTHER" id="PTHR46117">
    <property type="entry name" value="FI24210P1"/>
    <property type="match status" value="1"/>
</dbReference>
<dbReference type="PANTHER" id="PTHR46117:SF2">
    <property type="entry name" value="UPSTREAM STIMULATORY FACTOR 2"/>
    <property type="match status" value="1"/>
</dbReference>
<dbReference type="Pfam" id="PF00010">
    <property type="entry name" value="HLH"/>
    <property type="match status" value="1"/>
</dbReference>
<dbReference type="SMART" id="SM00353">
    <property type="entry name" value="HLH"/>
    <property type="match status" value="1"/>
</dbReference>
<dbReference type="SUPFAM" id="SSF47459">
    <property type="entry name" value="HLH, helix-loop-helix DNA-binding domain"/>
    <property type="match status" value="1"/>
</dbReference>
<dbReference type="PROSITE" id="PS50888">
    <property type="entry name" value="BHLH"/>
    <property type="match status" value="1"/>
</dbReference>
<organism>
    <name type="scientific">Mus musculus</name>
    <name type="common">Mouse</name>
    <dbReference type="NCBI Taxonomy" id="10090"/>
    <lineage>
        <taxon>Eukaryota</taxon>
        <taxon>Metazoa</taxon>
        <taxon>Chordata</taxon>
        <taxon>Craniata</taxon>
        <taxon>Vertebrata</taxon>
        <taxon>Euteleostomi</taxon>
        <taxon>Mammalia</taxon>
        <taxon>Eutheria</taxon>
        <taxon>Euarchontoglires</taxon>
        <taxon>Glires</taxon>
        <taxon>Rodentia</taxon>
        <taxon>Myomorpha</taxon>
        <taxon>Muroidea</taxon>
        <taxon>Muridae</taxon>
        <taxon>Murinae</taxon>
        <taxon>Mus</taxon>
        <taxon>Mus</taxon>
    </lineage>
</organism>
<keyword id="KW-0025">Alternative splicing</keyword>
<keyword id="KW-0238">DNA-binding</keyword>
<keyword id="KW-0539">Nucleus</keyword>
<keyword id="KW-1185">Reference proteome</keyword>
<keyword id="KW-0804">Transcription</keyword>
<keyword id="KW-0805">Transcription regulation</keyword>
<evidence type="ECO:0000255" key="1">
    <source>
        <dbReference type="PROSITE-ProRule" id="PRU00981"/>
    </source>
</evidence>
<evidence type="ECO:0000256" key="2">
    <source>
        <dbReference type="SAM" id="MobiDB-lite"/>
    </source>
</evidence>
<evidence type="ECO:0000269" key="3">
    <source>
    </source>
</evidence>
<evidence type="ECO:0000303" key="4">
    <source>
    </source>
</evidence>
<evidence type="ECO:0000305" key="5"/>
<proteinExistence type="evidence at protein level"/>
<comment type="function">
    <text>Transcription factor that binds to a symmetrical DNA sequence (E-boxes) (5'-CACGTG-3') that is found in a variety of viral and cellular promoters.</text>
</comment>
<comment type="subunit">
    <text evidence="3">Efficient DNA binding requires dimerization with another bHLH protein. Binds DNA as a homodimer or a heterodimer (USF1/USF2). Interacts with MAF.</text>
</comment>
<comment type="interaction">
    <interactant intactId="EBI-647583">
        <id>Q64705</id>
    </interactant>
    <interactant intactId="EBI-647118">
        <id>P42225</id>
        <label>Stat1</label>
    </interactant>
    <organismsDiffer>false</organismsDiffer>
    <experiments>3</experiments>
</comment>
<comment type="subcellular location">
    <subcellularLocation>
        <location>Nucleus</location>
    </subcellularLocation>
</comment>
<comment type="alternative products">
    <event type="alternative splicing"/>
    <isoform>
        <id>Q64705-1</id>
        <name>USF2A</name>
        <sequence type="displayed"/>
    </isoform>
    <isoform>
        <id>Q64705-2</id>
        <name>USF2B</name>
        <sequence type="described" ref="VSP_002166"/>
    </isoform>
    <text>Additional isoforms seem to exist.</text>
</comment>
<comment type="sequence caution" evidence="5">
    <conflict type="erroneous initiation">
        <sequence resource="EMBL-CDS" id="AAA20493"/>
    </conflict>
</comment>
<comment type="sequence caution" evidence="5">
    <conflict type="erroneous initiation">
        <sequence resource="EMBL-CDS" id="AAH19729"/>
    </conflict>
</comment>
<protein>
    <recommendedName>
        <fullName>Upstream stimulatory factor 2</fullName>
    </recommendedName>
    <alternativeName>
        <fullName>Major late transcription factor 2</fullName>
    </alternativeName>
    <alternativeName>
        <fullName>Upstream transcription factor 2</fullName>
    </alternativeName>
</protein>
<accession>Q64705</accession>
<accession>Q3UIL2</accession>
<accession>Q8VE59</accession>
<name>USF2_MOUSE</name>
<feature type="chain" id="PRO_0000127501" description="Upstream stimulatory factor 2">
    <location>
        <begin position="1"/>
        <end position="346"/>
    </location>
</feature>
<feature type="domain" description="bHLH" evidence="1">
    <location>
        <begin position="235"/>
        <end position="290"/>
    </location>
</feature>
<feature type="region of interest" description="Disordered" evidence="2">
    <location>
        <begin position="1"/>
        <end position="44"/>
    </location>
</feature>
<feature type="region of interest" description="Disordered" evidence="2">
    <location>
        <begin position="215"/>
        <end position="244"/>
    </location>
</feature>
<feature type="region of interest" description="Leucine-zipper">
    <location>
        <begin position="307"/>
        <end position="328"/>
    </location>
</feature>
<feature type="compositionally biased region" description="Low complexity" evidence="2">
    <location>
        <begin position="11"/>
        <end position="20"/>
    </location>
</feature>
<feature type="compositionally biased region" description="Basic and acidic residues" evidence="2">
    <location>
        <begin position="226"/>
        <end position="244"/>
    </location>
</feature>
<feature type="splice variant" id="VSP_002166" description="In isoform USF2B." evidence="4">
    <location>
        <begin position="77"/>
        <end position="143"/>
    </location>
</feature>
<feature type="sequence conflict" description="In Ref. 3; CAA54697." evidence="5" ref="3">
    <location>
        <begin position="240"/>
        <end position="243"/>
    </location>
</feature>
<feature type="sequence conflict" description="In Ref. 3; CAA54697." evidence="5" ref="3">
    <original>A</original>
    <variation>S</variation>
    <location>
        <position position="326"/>
    </location>
</feature>
<reference key="1">
    <citation type="journal article" date="1994" name="J. Biol. Chem.">
        <title>Archaic structure of the gene encoding transcription factor USF.</title>
        <authorList>
            <person name="Lin Q."/>
            <person name="Luo X."/>
            <person name="Sawadogo M."/>
        </authorList>
    </citation>
    <scope>NUCLEOTIDE SEQUENCE [GENOMIC DNA]</scope>
    <source>
        <strain>129/Sv</strain>
        <tissue>Kidney</tissue>
        <tissue>Spleen</tissue>
    </source>
</reference>
<reference key="2">
    <citation type="journal article" date="1994" name="Nucleic Acids Res.">
        <title>Ubiquitous expression of the 43- and 44-kDa forms of transcription factor USF in mammalian cells.</title>
        <authorList>
            <person name="Sirito M."/>
            <person name="Lin Q."/>
            <person name="Maity T."/>
            <person name="Sawadogo M."/>
        </authorList>
    </citation>
    <scope>NUCLEOTIDE SEQUENCE [MRNA] (ISOFORMS USF2A AND USF2B)</scope>
</reference>
<reference key="3">
    <citation type="journal article" date="1995" name="Genomics">
        <title>Structure, sequence, and chromosomal location of the gene for USF2 transcription factors in mouse.</title>
        <authorList>
            <person name="Henrion A.A."/>
            <person name="Martinez A."/>
            <person name="Mattei M.-G."/>
            <person name="Kahn A."/>
            <person name="Raymondjean M."/>
        </authorList>
    </citation>
    <scope>NUCLEOTIDE SEQUENCE [GENOMIC DNA]</scope>
    <source>
        <strain>129</strain>
    </source>
</reference>
<reference key="4">
    <citation type="journal article" date="2004" name="Genome Res.">
        <title>The status, quality, and expansion of the NIH full-length cDNA project: the Mammalian Gene Collection (MGC).</title>
        <authorList>
            <consortium name="The MGC Project Team"/>
        </authorList>
    </citation>
    <scope>NUCLEOTIDE SEQUENCE [LARGE SCALE MRNA] (ISOFORM USF2A)</scope>
    <source>
        <strain>FVB/N</strain>
        <strain>FVB/N-3</strain>
        <tissue>Mammary tumor</tissue>
    </source>
</reference>
<reference key="5">
    <citation type="journal article" date="2005" name="Science">
        <title>The transcriptional landscape of the mammalian genome.</title>
        <authorList>
            <person name="Carninci P."/>
            <person name="Kasukawa T."/>
            <person name="Katayama S."/>
            <person name="Gough J."/>
            <person name="Frith M.C."/>
            <person name="Maeda N."/>
            <person name="Oyama R."/>
            <person name="Ravasi T."/>
            <person name="Lenhard B."/>
            <person name="Wells C."/>
            <person name="Kodzius R."/>
            <person name="Shimokawa K."/>
            <person name="Bajic V.B."/>
            <person name="Brenner S.E."/>
            <person name="Batalov S."/>
            <person name="Forrest A.R."/>
            <person name="Zavolan M."/>
            <person name="Davis M.J."/>
            <person name="Wilming L.G."/>
            <person name="Aidinis V."/>
            <person name="Allen J.E."/>
            <person name="Ambesi-Impiombato A."/>
            <person name="Apweiler R."/>
            <person name="Aturaliya R.N."/>
            <person name="Bailey T.L."/>
            <person name="Bansal M."/>
            <person name="Baxter L."/>
            <person name="Beisel K.W."/>
            <person name="Bersano T."/>
            <person name="Bono H."/>
            <person name="Chalk A.M."/>
            <person name="Chiu K.P."/>
            <person name="Choudhary V."/>
            <person name="Christoffels A."/>
            <person name="Clutterbuck D.R."/>
            <person name="Crowe M.L."/>
            <person name="Dalla E."/>
            <person name="Dalrymple B.P."/>
            <person name="de Bono B."/>
            <person name="Della Gatta G."/>
            <person name="di Bernardo D."/>
            <person name="Down T."/>
            <person name="Engstrom P."/>
            <person name="Fagiolini M."/>
            <person name="Faulkner G."/>
            <person name="Fletcher C.F."/>
            <person name="Fukushima T."/>
            <person name="Furuno M."/>
            <person name="Futaki S."/>
            <person name="Gariboldi M."/>
            <person name="Georgii-Hemming P."/>
            <person name="Gingeras T.R."/>
            <person name="Gojobori T."/>
            <person name="Green R.E."/>
            <person name="Gustincich S."/>
            <person name="Harbers M."/>
            <person name="Hayashi Y."/>
            <person name="Hensch T.K."/>
            <person name="Hirokawa N."/>
            <person name="Hill D."/>
            <person name="Huminiecki L."/>
            <person name="Iacono M."/>
            <person name="Ikeo K."/>
            <person name="Iwama A."/>
            <person name="Ishikawa T."/>
            <person name="Jakt M."/>
            <person name="Kanapin A."/>
            <person name="Katoh M."/>
            <person name="Kawasawa Y."/>
            <person name="Kelso J."/>
            <person name="Kitamura H."/>
            <person name="Kitano H."/>
            <person name="Kollias G."/>
            <person name="Krishnan S.P."/>
            <person name="Kruger A."/>
            <person name="Kummerfeld S.K."/>
            <person name="Kurochkin I.V."/>
            <person name="Lareau L.F."/>
            <person name="Lazarevic D."/>
            <person name="Lipovich L."/>
            <person name="Liu J."/>
            <person name="Liuni S."/>
            <person name="McWilliam S."/>
            <person name="Madan Babu M."/>
            <person name="Madera M."/>
            <person name="Marchionni L."/>
            <person name="Matsuda H."/>
            <person name="Matsuzawa S."/>
            <person name="Miki H."/>
            <person name="Mignone F."/>
            <person name="Miyake S."/>
            <person name="Morris K."/>
            <person name="Mottagui-Tabar S."/>
            <person name="Mulder N."/>
            <person name="Nakano N."/>
            <person name="Nakauchi H."/>
            <person name="Ng P."/>
            <person name="Nilsson R."/>
            <person name="Nishiguchi S."/>
            <person name="Nishikawa S."/>
            <person name="Nori F."/>
            <person name="Ohara O."/>
            <person name="Okazaki Y."/>
            <person name="Orlando V."/>
            <person name="Pang K.C."/>
            <person name="Pavan W.J."/>
            <person name="Pavesi G."/>
            <person name="Pesole G."/>
            <person name="Petrovsky N."/>
            <person name="Piazza S."/>
            <person name="Reed J."/>
            <person name="Reid J.F."/>
            <person name="Ring B.Z."/>
            <person name="Ringwald M."/>
            <person name="Rost B."/>
            <person name="Ruan Y."/>
            <person name="Salzberg S.L."/>
            <person name="Sandelin A."/>
            <person name="Schneider C."/>
            <person name="Schoenbach C."/>
            <person name="Sekiguchi K."/>
            <person name="Semple C.A."/>
            <person name="Seno S."/>
            <person name="Sessa L."/>
            <person name="Sheng Y."/>
            <person name="Shibata Y."/>
            <person name="Shimada H."/>
            <person name="Shimada K."/>
            <person name="Silva D."/>
            <person name="Sinclair B."/>
            <person name="Sperling S."/>
            <person name="Stupka E."/>
            <person name="Sugiura K."/>
            <person name="Sultana R."/>
            <person name="Takenaka Y."/>
            <person name="Taki K."/>
            <person name="Tammoja K."/>
            <person name="Tan S.L."/>
            <person name="Tang S."/>
            <person name="Taylor M.S."/>
            <person name="Tegner J."/>
            <person name="Teichmann S.A."/>
            <person name="Ueda H.R."/>
            <person name="van Nimwegen E."/>
            <person name="Verardo R."/>
            <person name="Wei C.L."/>
            <person name="Yagi K."/>
            <person name="Yamanishi H."/>
            <person name="Zabarovsky E."/>
            <person name="Zhu S."/>
            <person name="Zimmer A."/>
            <person name="Hide W."/>
            <person name="Bult C."/>
            <person name="Grimmond S.M."/>
            <person name="Teasdale R.D."/>
            <person name="Liu E.T."/>
            <person name="Brusic V."/>
            <person name="Quackenbush J."/>
            <person name="Wahlestedt C."/>
            <person name="Mattick J.S."/>
            <person name="Hume D.A."/>
            <person name="Kai C."/>
            <person name="Sasaki D."/>
            <person name="Tomaru Y."/>
            <person name="Fukuda S."/>
            <person name="Kanamori-Katayama M."/>
            <person name="Suzuki M."/>
            <person name="Aoki J."/>
            <person name="Arakawa T."/>
            <person name="Iida J."/>
            <person name="Imamura K."/>
            <person name="Itoh M."/>
            <person name="Kato T."/>
            <person name="Kawaji H."/>
            <person name="Kawagashira N."/>
            <person name="Kawashima T."/>
            <person name="Kojima M."/>
            <person name="Kondo S."/>
            <person name="Konno H."/>
            <person name="Nakano K."/>
            <person name="Ninomiya N."/>
            <person name="Nishio T."/>
            <person name="Okada M."/>
            <person name="Plessy C."/>
            <person name="Shibata K."/>
            <person name="Shiraki T."/>
            <person name="Suzuki S."/>
            <person name="Tagami M."/>
            <person name="Waki K."/>
            <person name="Watahiki A."/>
            <person name="Okamura-Oho Y."/>
            <person name="Suzuki H."/>
            <person name="Kawai J."/>
            <person name="Hayashizaki Y."/>
        </authorList>
    </citation>
    <scope>NUCLEOTIDE SEQUENCE [LARGE SCALE MRNA] OF 4-346 (ISOFORM USF2A)</scope>
    <source>
        <strain>C57BL/6J</strain>
        <tissue>Amnion</tissue>
    </source>
</reference>
<reference key="6">
    <citation type="journal article" date="1997" name="Biochem. Biophys. Res. Commun.">
        <title>USF2/FIP associates with the b-Zip transcription factor, c-Maf, via its bHLH domain and inhibits c-Maf DNA binding activity.</title>
        <authorList>
            <person name="Kurschner C."/>
            <person name="Morgan J.I."/>
        </authorList>
    </citation>
    <scope>INTERACTION WITH MAF</scope>
</reference>
<gene>
    <name type="primary">Usf2</name>
</gene>
<sequence length="346" mass="36954">MDMLDPGLDPASSATAAAAASHDKGPEAEEGVELQEGGDGPGAEEQTAVAIASVQQAAFGDHNIQYQFRTESNGGQVTYRVVQVTDGQLDGQGDAAGAVSVVSTAAFAGGQQAVTQVGVDGAAQRPGPAAASVPTGPAAPFPLAVIQNPFSNGGSPAAEAVSGEARFAYFPASSVGDTTAVSVQTTDQSLQAGGQFYVMMTPQDVLQTGTQRTIAPRTHPYSPKIDGTRTPRDERRRAQHNEVERRRRDKINNWIVQLSKIIPDCHADNSKTGASKGGILSKACDYIRELRQTNQRMQETFKEAERLQMDNELLRQQIEELKNENALLRAQLQQHNLEMVGESTRQ</sequence>